<keyword id="KW-0456">Lyase</keyword>
<keyword id="KW-0460">Magnesium</keyword>
<keyword id="KW-0479">Metal-binding</keyword>
<keyword id="KW-1185">Reference proteome</keyword>
<protein>
    <recommendedName>
        <fullName evidence="4">Beta-caryophyllene synthase TPS9FN</fullName>
        <ecNumber evidence="3">4.2.3.57</ecNumber>
    </recommendedName>
    <alternativeName>
        <fullName evidence="4">Alpha-humulene synthase TPS9FN</fullName>
        <ecNumber evidence="3">4.2.3.104</ecNumber>
    </alternativeName>
    <alternativeName>
        <fullName evidence="4">Terpene synthase 9FN</fullName>
        <shortName evidence="4">CsTPS9FN</shortName>
    </alternativeName>
</protein>
<gene>
    <name evidence="4" type="primary">TPS9FN</name>
    <name evidence="9" type="ORF">F8388_008713</name>
    <name evidence="8" type="ORF">F8388_017921</name>
    <name evidence="6" type="ORF">G4B88_017076</name>
    <name evidence="7" type="ORF">G4B88_025071</name>
</gene>
<dbReference type="EC" id="4.2.3.57" evidence="3"/>
<dbReference type="EC" id="4.2.3.104" evidence="3"/>
<dbReference type="EMBL" id="KY014555">
    <property type="protein sequence ID" value="ARE72251.2"/>
    <property type="molecule type" value="mRNA"/>
</dbReference>
<dbReference type="EMBL" id="JAATIP010000006">
    <property type="protein sequence ID" value="KAF4395614.1"/>
    <property type="molecule type" value="Genomic_DNA"/>
</dbReference>
<dbReference type="EMBL" id="JAATIP010000012">
    <property type="protein sequence ID" value="KAF4394108.1"/>
    <property type="molecule type" value="Genomic_DNA"/>
</dbReference>
<dbReference type="EMBL" id="JAATIQ010000236">
    <property type="protein sequence ID" value="KAF4368149.1"/>
    <property type="molecule type" value="Genomic_DNA"/>
</dbReference>
<dbReference type="EMBL" id="JAATIQ010000390">
    <property type="protein sequence ID" value="KAF4358088.1"/>
    <property type="molecule type" value="Genomic_DNA"/>
</dbReference>
<dbReference type="SMR" id="A0A7J6HK32"/>
<dbReference type="OrthoDB" id="1143271at2759"/>
<dbReference type="UniPathway" id="UPA00213"/>
<dbReference type="Proteomes" id="UP000525078">
    <property type="component" value="Unassembled WGS sequence"/>
</dbReference>
<dbReference type="Proteomes" id="UP000583929">
    <property type="component" value="Unassembled WGS sequence"/>
</dbReference>
<dbReference type="Proteomes" id="UP000596661">
    <property type="component" value="Unplaced"/>
</dbReference>
<dbReference type="GO" id="GO:0000287">
    <property type="term" value="F:magnesium ion binding"/>
    <property type="evidence" value="ECO:0007669"/>
    <property type="project" value="InterPro"/>
</dbReference>
<dbReference type="GO" id="GO:0010333">
    <property type="term" value="F:terpene synthase activity"/>
    <property type="evidence" value="ECO:0007669"/>
    <property type="project" value="InterPro"/>
</dbReference>
<dbReference type="GO" id="GO:0016102">
    <property type="term" value="P:diterpenoid biosynthetic process"/>
    <property type="evidence" value="ECO:0007669"/>
    <property type="project" value="InterPro"/>
</dbReference>
<dbReference type="CDD" id="cd00684">
    <property type="entry name" value="Terpene_cyclase_plant_C1"/>
    <property type="match status" value="1"/>
</dbReference>
<dbReference type="FunFam" id="1.10.600.10:FF:000007">
    <property type="entry name" value="Isoprene synthase, chloroplastic"/>
    <property type="match status" value="1"/>
</dbReference>
<dbReference type="FunFam" id="1.50.10.130:FF:000001">
    <property type="entry name" value="Isoprene synthase, chloroplastic"/>
    <property type="match status" value="1"/>
</dbReference>
<dbReference type="Gene3D" id="1.10.600.10">
    <property type="entry name" value="Farnesyl Diphosphate Synthase"/>
    <property type="match status" value="1"/>
</dbReference>
<dbReference type="Gene3D" id="1.50.10.130">
    <property type="entry name" value="Terpene synthase, N-terminal domain"/>
    <property type="match status" value="1"/>
</dbReference>
<dbReference type="InterPro" id="IPR008949">
    <property type="entry name" value="Isoprenoid_synthase_dom_sf"/>
</dbReference>
<dbReference type="InterPro" id="IPR034741">
    <property type="entry name" value="Terpene_cyclase-like_1_C"/>
</dbReference>
<dbReference type="InterPro" id="IPR044814">
    <property type="entry name" value="Terpene_cyclase_plant_C1"/>
</dbReference>
<dbReference type="InterPro" id="IPR001906">
    <property type="entry name" value="Terpene_synth_N"/>
</dbReference>
<dbReference type="InterPro" id="IPR036965">
    <property type="entry name" value="Terpene_synth_N_sf"/>
</dbReference>
<dbReference type="InterPro" id="IPR050148">
    <property type="entry name" value="Terpene_synthase-like"/>
</dbReference>
<dbReference type="InterPro" id="IPR005630">
    <property type="entry name" value="Terpene_synthase_metal-bd"/>
</dbReference>
<dbReference type="InterPro" id="IPR008930">
    <property type="entry name" value="Terpenoid_cyclase/PrenylTrfase"/>
</dbReference>
<dbReference type="PANTHER" id="PTHR31225:SF221">
    <property type="entry name" value="(-)-GERMACRENE D SYNTHASE"/>
    <property type="match status" value="1"/>
</dbReference>
<dbReference type="PANTHER" id="PTHR31225">
    <property type="entry name" value="OS04G0344100 PROTEIN-RELATED"/>
    <property type="match status" value="1"/>
</dbReference>
<dbReference type="Pfam" id="PF01397">
    <property type="entry name" value="Terpene_synth"/>
    <property type="match status" value="1"/>
</dbReference>
<dbReference type="Pfam" id="PF03936">
    <property type="entry name" value="Terpene_synth_C"/>
    <property type="match status" value="1"/>
</dbReference>
<dbReference type="SFLD" id="SFLDS00005">
    <property type="entry name" value="Isoprenoid_Synthase_Type_I"/>
    <property type="match status" value="1"/>
</dbReference>
<dbReference type="SFLD" id="SFLDG01019">
    <property type="entry name" value="Terpene_Cyclase_Like_1_C_Termi"/>
    <property type="match status" value="1"/>
</dbReference>
<dbReference type="SUPFAM" id="SSF48239">
    <property type="entry name" value="Terpenoid cyclases/Protein prenyltransferases"/>
    <property type="match status" value="1"/>
</dbReference>
<dbReference type="SUPFAM" id="SSF48576">
    <property type="entry name" value="Terpenoid synthases"/>
    <property type="match status" value="1"/>
</dbReference>
<reference key="1">
    <citation type="journal article" date="2017" name="PLoS ONE">
        <title>Terpene synthases from Cannabis sativa.</title>
        <authorList>
            <person name="Booth J.K."/>
            <person name="Page J.E."/>
            <person name="Bohlmann J."/>
        </authorList>
    </citation>
    <scope>NUCLEOTIDE SEQUENCE [MRNA]</scope>
    <scope>FUNCTION</scope>
    <scope>CATALYTIC ACTIVITY</scope>
    <scope>PATHWAY</scope>
    <scope>TISSUE SPECIFICITY</scope>
    <source>
        <strain>cv. Finola</strain>
    </source>
</reference>
<reference key="2">
    <citation type="submission" date="2020-03" db="EMBL/GenBank/DDBJ databases">
        <title>Sequence and annotation of 42 cannabis genomes reveals extensive copy number variation in cannabinoid synthesis and pathogen resistance genes.</title>
        <authorList>
            <person name="Mckernan K.J."/>
            <person name="Helbert Y."/>
            <person name="Kane L.T."/>
            <person name="Ebling H."/>
            <person name="Zhang L."/>
            <person name="Liu B."/>
            <person name="Eaton Z."/>
            <person name="Mclaughlin S."/>
            <person name="Kingan S."/>
            <person name="Baybayan P."/>
            <person name="Concepcion G."/>
            <person name="Jordan M."/>
            <person name="Riva A."/>
            <person name="Barbazuk W."/>
            <person name="Harkins T."/>
        </authorList>
    </citation>
    <scope>NUCLEOTIDE SEQUENCE [LARGE SCALE GENOMIC DNA]</scope>
    <source>
        <strain>cv. Jamaican Lion 4</strain>
        <tissue>Leaf</tissue>
    </source>
</reference>
<name>TS9FN_CANSA</name>
<proteinExistence type="evidence at protein level"/>
<organism>
    <name type="scientific">Cannabis sativa</name>
    <name type="common">Hemp</name>
    <name type="synonym">Marijuana</name>
    <dbReference type="NCBI Taxonomy" id="3483"/>
    <lineage>
        <taxon>Eukaryota</taxon>
        <taxon>Viridiplantae</taxon>
        <taxon>Streptophyta</taxon>
        <taxon>Embryophyta</taxon>
        <taxon>Tracheophyta</taxon>
        <taxon>Spermatophyta</taxon>
        <taxon>Magnoliopsida</taxon>
        <taxon>eudicotyledons</taxon>
        <taxon>Gunneridae</taxon>
        <taxon>Pentapetalae</taxon>
        <taxon>rosids</taxon>
        <taxon>fabids</taxon>
        <taxon>Rosales</taxon>
        <taxon>Cannabaceae</taxon>
        <taxon>Cannabis</taxon>
    </lineage>
</organism>
<accession>A0A7J6HK32</accession>
<accession>A0A1V0QSF2</accession>
<accession>A0A7J6EI27</accession>
<evidence type="ECO:0000250" key="1">
    <source>
        <dbReference type="UniProtKB" id="A0A1C9J6A7"/>
    </source>
</evidence>
<evidence type="ECO:0000250" key="2">
    <source>
        <dbReference type="UniProtKB" id="Q40577"/>
    </source>
</evidence>
<evidence type="ECO:0000269" key="3">
    <source>
    </source>
</evidence>
<evidence type="ECO:0000303" key="4">
    <source>
    </source>
</evidence>
<evidence type="ECO:0000305" key="5"/>
<evidence type="ECO:0000312" key="6">
    <source>
        <dbReference type="EMBL" id="KAF4358088.1"/>
    </source>
</evidence>
<evidence type="ECO:0000312" key="7">
    <source>
        <dbReference type="EMBL" id="KAF4368149.1"/>
    </source>
</evidence>
<evidence type="ECO:0000312" key="8">
    <source>
        <dbReference type="EMBL" id="KAF4394108.1"/>
    </source>
</evidence>
<evidence type="ECO:0000312" key="9">
    <source>
        <dbReference type="EMBL" id="KAF4395614.1"/>
    </source>
</evidence>
<comment type="function">
    <text evidence="3">Involved in sesquiterpene olefins biosynthesis, constituants of cannabinoids and terpenoids-rich resins (PubMed:28355238). Catalyzes mainly the conversion of (2E)-farnesyl diphosphate to beta-caryophyllene and alpha-humulene (PubMed:28355238). Can also use (2E)-geranyl diphosphate as substrate with low efficiency (PubMed:28355238).</text>
</comment>
<comment type="catalytic activity">
    <reaction evidence="3">
        <text>(2E,6E)-farnesyl diphosphate = (-)-(E)-beta-caryophyllene + diphosphate</text>
        <dbReference type="Rhea" id="RHEA:28294"/>
        <dbReference type="ChEBI" id="CHEBI:10357"/>
        <dbReference type="ChEBI" id="CHEBI:33019"/>
        <dbReference type="ChEBI" id="CHEBI:175763"/>
        <dbReference type="EC" id="4.2.3.57"/>
    </reaction>
    <physiologicalReaction direction="left-to-right" evidence="3">
        <dbReference type="Rhea" id="RHEA:28295"/>
    </physiologicalReaction>
</comment>
<comment type="catalytic activity">
    <reaction evidence="3">
        <text>(2E,6E)-farnesyl diphosphate = alpha-humulene + diphosphate</text>
        <dbReference type="Rhea" id="RHEA:31895"/>
        <dbReference type="ChEBI" id="CHEBI:5768"/>
        <dbReference type="ChEBI" id="CHEBI:33019"/>
        <dbReference type="ChEBI" id="CHEBI:175763"/>
        <dbReference type="EC" id="4.2.3.104"/>
    </reaction>
    <physiologicalReaction direction="left-to-right" evidence="3">
        <dbReference type="Rhea" id="RHEA:31896"/>
    </physiologicalReaction>
</comment>
<comment type="cofactor">
    <cofactor evidence="1">
        <name>Mg(2+)</name>
        <dbReference type="ChEBI" id="CHEBI:18420"/>
    </cofactor>
    <cofactor evidence="1">
        <name>Mn(2+)</name>
        <dbReference type="ChEBI" id="CHEBI:29035"/>
    </cofactor>
    <text evidence="1">Binds 3 Mg(2+) or Mn(2+) ions per subunit.</text>
</comment>
<comment type="pathway">
    <text evidence="3">Secondary metabolite biosynthesis; terpenoid biosynthesis.</text>
</comment>
<comment type="tissue specificity">
    <text evidence="3">Expressed in glandular trichomes two to four weeks after flowering onset.</text>
</comment>
<comment type="domain">
    <text evidence="2">The Asp-Asp-Xaa-Xaa-Asp/Glu (DDXXD/E) motif is important for the catalytic activity, presumably through binding to Mg(2+).</text>
</comment>
<comment type="similarity">
    <text evidence="5">Belongs to the terpene synthase family. Tpsb subfamily.</text>
</comment>
<sequence length="556" mass="65402">MSYQVLASSQNDKVSKIVRPTTTYQPSIWGERFLQYSISDQDFSYKKQRVDELKEVVRREVFLECYDNVSYVLKIVDDVQRLGLSYHFENEIEKALQHIYDNTIHQNHKDEDLHDTSTRFRLLRQHGFMVSSNIFKIFKDEQGNFKECLITDIPGLLSLYEASHLSYIGENILDEALAFTTTHLHQFVKNEKTHPLSNEVLLALQRPIRKSLERLHARHYISSYENKICHNKTLLELAKLDFNLLQCLHRKELSQISRWWKEIDFVHKLPFARDRIVELYLWLLGVFHEPELSLARIISTKVIALASVADDIYDAYGTFEELELLTESINRWDLNCADQLRPECLQTFYKVLLNCYEEFESELGKEESYKVYYAREAMKRLLGAYFSEARWLHEGYFPSFDEHLKVSLISCGYTMMIVTSLIGMKDCVTKQDFEWLSKDPKIMRDCNILCRFMDDIVSHKFEQQRDHSPSTVESYMRQYGVSEQEACDELRKQVINSWKEINKAFLRPSNVPYPVLSLVLNFSRVMDLLYKDGDGYTHIGKETKNSVVALLIDQIP</sequence>
<feature type="chain" id="PRO_0000460905" description="Beta-caryophyllene synthase TPS9FN">
    <location>
        <begin position="1"/>
        <end position="556"/>
    </location>
</feature>
<feature type="short sequence motif" description="DDXXD motif" evidence="2">
    <location>
        <begin position="310"/>
        <end position="314"/>
    </location>
</feature>
<feature type="binding site" evidence="2">
    <location>
        <position position="273"/>
    </location>
    <ligand>
        <name>(2E,6E)-farnesyl diphosphate</name>
        <dbReference type="ChEBI" id="CHEBI:175763"/>
    </ligand>
</feature>
<feature type="binding site" evidence="2">
    <location>
        <position position="310"/>
    </location>
    <ligand>
        <name>(2E,6E)-farnesyl diphosphate</name>
        <dbReference type="ChEBI" id="CHEBI:175763"/>
    </ligand>
</feature>
<feature type="binding site" evidence="2">
    <location>
        <position position="310"/>
    </location>
    <ligand>
        <name>Mg(2+)</name>
        <dbReference type="ChEBI" id="CHEBI:18420"/>
        <label>1</label>
    </ligand>
</feature>
<feature type="binding site" evidence="2">
    <location>
        <position position="310"/>
    </location>
    <ligand>
        <name>Mg(2+)</name>
        <dbReference type="ChEBI" id="CHEBI:18420"/>
        <label>2</label>
    </ligand>
</feature>
<feature type="binding site" evidence="2">
    <location>
        <position position="314"/>
    </location>
    <ligand>
        <name>(2E,6E)-farnesyl diphosphate</name>
        <dbReference type="ChEBI" id="CHEBI:175763"/>
    </ligand>
</feature>
<feature type="binding site" evidence="2">
    <location>
        <position position="314"/>
    </location>
    <ligand>
        <name>Mg(2+)</name>
        <dbReference type="ChEBI" id="CHEBI:18420"/>
        <label>1</label>
    </ligand>
</feature>
<feature type="binding site" evidence="2">
    <location>
        <position position="314"/>
    </location>
    <ligand>
        <name>Mg(2+)</name>
        <dbReference type="ChEBI" id="CHEBI:18420"/>
        <label>2</label>
    </ligand>
</feature>
<feature type="binding site" evidence="2">
    <location>
        <position position="451"/>
    </location>
    <ligand>
        <name>(2E,6E)-farnesyl diphosphate</name>
        <dbReference type="ChEBI" id="CHEBI:175763"/>
    </ligand>
</feature>
<feature type="binding site" evidence="2">
    <location>
        <position position="454"/>
    </location>
    <ligand>
        <name>(2E,6E)-farnesyl diphosphate</name>
        <dbReference type="ChEBI" id="CHEBI:175763"/>
    </ligand>
</feature>
<feature type="binding site" evidence="2">
    <location>
        <position position="454"/>
    </location>
    <ligand>
        <name>Mg(2+)</name>
        <dbReference type="ChEBI" id="CHEBI:18420"/>
        <label>3</label>
    </ligand>
</feature>
<feature type="binding site" evidence="2">
    <location>
        <position position="458"/>
    </location>
    <ligand>
        <name>Mg(2+)</name>
        <dbReference type="ChEBI" id="CHEBI:18420"/>
        <label>3</label>
    </ligand>
</feature>
<feature type="binding site" evidence="2">
    <location>
        <position position="462"/>
    </location>
    <ligand>
        <name>Mg(2+)</name>
        <dbReference type="ChEBI" id="CHEBI:18420"/>
        <label>3</label>
    </ligand>
</feature>
<feature type="sequence conflict" description="In Ref. 2; KAF4358088/KAF4368149/KAF4394108." evidence="5" ref="2">
    <original>F</original>
    <variation>V</variation>
    <location>
        <position position="43"/>
    </location>
</feature>
<feature type="sequence conflict" description="In Ref. 2; KAF4358088/KAF4368149/KAF4394108." evidence="5" ref="2">
    <original>NEIEK</original>
    <variation>SEIER</variation>
    <location>
        <begin position="90"/>
        <end position="94"/>
    </location>
</feature>
<feature type="sequence conflict" description="In Ref. 2; KAF4395614." evidence="5" ref="2">
    <original>K</original>
    <variation>E</variation>
    <location>
        <position position="109"/>
    </location>
</feature>
<feature type="sequence conflict" description="In Ref. 2; KAF4358088/KAF4368149/KAF4394108." evidence="5" ref="2">
    <original>Q</original>
    <variation>K</variation>
    <location>
        <position position="142"/>
    </location>
</feature>
<feature type="sequence conflict" description="In Ref. 1; ARE72251." evidence="5" ref="1">
    <original>P</original>
    <variation>L</variation>
    <location>
        <position position="154"/>
    </location>
</feature>
<feature type="sequence conflict" description="In Ref. 2; KAF4358088/KAF4368149/KAF4394108." evidence="5" ref="2">
    <original>H</original>
    <variation>Q</variation>
    <location>
        <position position="164"/>
    </location>
</feature>
<feature type="sequence conflict" description="In Ref. 1; ARE72251." evidence="5" ref="1">
    <original>D</original>
    <variation>N</variation>
    <location>
        <position position="174"/>
    </location>
</feature>
<feature type="sequence conflict" description="In Ref. 2; KAF4358088/KAF4368149/KAF4394108." evidence="5" ref="2">
    <original>A</original>
    <variation>S</variation>
    <location>
        <position position="176"/>
    </location>
</feature>
<feature type="sequence conflict" description="In Ref. 2; KAF4358088/KAF4368149/KAF4394108." evidence="5" ref="2">
    <original>E</original>
    <variation>D</variation>
    <location>
        <position position="213"/>
    </location>
</feature>
<feature type="sequence conflict" description="In Ref. 1; ARE72251." evidence="5" ref="1">
    <original>C</original>
    <variation>S</variation>
    <location>
        <position position="229"/>
    </location>
</feature>
<feature type="sequence conflict" description="In Ref. 2; KAF4358088/KAF4368149/KAF4394108." evidence="5" ref="2">
    <original>Q</original>
    <variation>E</variation>
    <location>
        <position position="255"/>
    </location>
</feature>
<feature type="sequence conflict" description="In Ref. 2; KAF4358088/KAF4368149/KAF4394108." evidence="5" ref="2">
    <original>L</original>
    <variation>F</variation>
    <location>
        <position position="292"/>
    </location>
</feature>
<feature type="sequence conflict" description="In Ref. 2; KAF4358088/KAF4368149/KAF4394108." evidence="5" ref="2">
    <original>I</original>
    <variation>N</variation>
    <location>
        <position position="297"/>
    </location>
</feature>
<feature type="sequence conflict" description="In Ref. 2; KAF4395614." evidence="5" ref="2">
    <original>A</original>
    <variation>E</variation>
    <location>
        <position position="377"/>
    </location>
</feature>
<feature type="sequence conflict" description="In Ref. 2; KAF4395614." evidence="5" ref="2">
    <original>F</original>
    <variation>L</variation>
    <location>
        <position position="397"/>
    </location>
</feature>
<feature type="sequence conflict" description="In Ref. 2; KAF4395614." evidence="5" ref="2">
    <original>K</original>
    <variation>N</variation>
    <location>
        <position position="441"/>
    </location>
</feature>
<feature type="sequence conflict" description="In Ref. 2; KAF4358088/KAF4368149/KAF4394108." evidence="5" ref="2">
    <original>I</original>
    <variation>V</variation>
    <location>
        <position position="495"/>
    </location>
</feature>
<feature type="sequence conflict" description="In Ref. 2; KAF4358088/KAF4368149/KAF4394108." evidence="5" ref="2">
    <original>I</original>
    <variation>V</variation>
    <location>
        <position position="539"/>
    </location>
</feature>
<feature type="sequence conflict" description="In Ref. 2; KAF4395614." evidence="5" ref="2">
    <original>V</original>
    <variation>A</variation>
    <location>
        <position position="548"/>
    </location>
</feature>